<name>CDC50_CHATD</name>
<reference evidence="10" key="1">
    <citation type="journal article" date="2011" name="Cell">
        <title>Insight into structure and assembly of the nuclear pore complex by utilizing the genome of a eukaryotic thermophile.</title>
        <authorList>
            <person name="Amlacher S."/>
            <person name="Sarges P."/>
            <person name="Flemming D."/>
            <person name="van Noort V."/>
            <person name="Kunze R."/>
            <person name="Devos D.P."/>
            <person name="Arumugam M."/>
            <person name="Bork P."/>
            <person name="Hurt E."/>
        </authorList>
    </citation>
    <scope>NUCLEOTIDE SEQUENCE [LARGE SCALE GENOMIC DNA]</scope>
    <source>
        <strain evidence="10">DSM 1495 / CBS 144.50 / IMI 039719</strain>
    </source>
</reference>
<reference evidence="11 12" key="2">
    <citation type="journal article" date="2020" name="Protein Cell">
        <title>Structures of a P4-ATPase lipid flippase in lipid bilayers.</title>
        <authorList>
            <person name="He Y."/>
            <person name="Xu J."/>
            <person name="Wu X."/>
            <person name="Li L."/>
        </authorList>
    </citation>
    <scope>STRUCTURE BY ELECTRON MICROSCOPY (3.40 ANGSTROMS) IN A COMPLEX WITH DNF1 AND MAGNESIUM</scope>
    <scope>FUNCTION</scope>
    <scope>IDENTIFICATION IN A COMPLEX WITH DNF1</scope>
    <scope>INTERACTION WITH DNF1</scope>
    <scope>DISULFIDE BONDS</scope>
</reference>
<comment type="function">
    <text evidence="6">Accessory component of a P4-ATPase flippase complex which catalyzes the hydrolysis of ATP coupled to the transport of phosphatidylcholine and phosphatidylserine from the lumen to the cytosolic leaflet of membranes and ensures the maintenance of asymmetric distribution of phospholipids.</text>
</comment>
<comment type="subunit">
    <text evidence="6">Component of a flippase complex consisting of DNF1 and CDC50 (PubMed:32303992). Interacts with DNF1; the interaction is direct (PubMed:32303992).</text>
</comment>
<comment type="subcellular location">
    <subcellularLocation>
        <location evidence="2">Cell membrane</location>
        <topology evidence="3">Multi-pass membrane protein</topology>
    </subcellularLocation>
</comment>
<comment type="similarity">
    <text evidence="8">Belongs to the CDC50/LEM3 family.</text>
</comment>
<proteinExistence type="evidence at protein level"/>
<evidence type="ECO:0000250" key="1">
    <source>
        <dbReference type="UniProtKB" id="P25656"/>
    </source>
</evidence>
<evidence type="ECO:0000250" key="2">
    <source>
        <dbReference type="UniProtKB" id="P42838"/>
    </source>
</evidence>
<evidence type="ECO:0000255" key="3"/>
<evidence type="ECO:0000255" key="4">
    <source>
        <dbReference type="PROSITE-ProRule" id="PRU00498"/>
    </source>
</evidence>
<evidence type="ECO:0000256" key="5">
    <source>
        <dbReference type="SAM" id="MobiDB-lite"/>
    </source>
</evidence>
<evidence type="ECO:0000269" key="6">
    <source>
    </source>
</evidence>
<evidence type="ECO:0000303" key="7">
    <source>
    </source>
</evidence>
<evidence type="ECO:0000305" key="8"/>
<evidence type="ECO:0000312" key="9">
    <source>
        <dbReference type="EMBL" id="EGS18631.1"/>
    </source>
</evidence>
<evidence type="ECO:0000312" key="10">
    <source>
        <dbReference type="Proteomes" id="UP000008066"/>
    </source>
</evidence>
<evidence type="ECO:0007744" key="11">
    <source>
        <dbReference type="PDB" id="6LCP"/>
    </source>
</evidence>
<evidence type="ECO:0007744" key="12">
    <source>
        <dbReference type="PDB" id="6LCR"/>
    </source>
</evidence>
<evidence type="ECO:0007829" key="13">
    <source>
        <dbReference type="PDB" id="6LCP"/>
    </source>
</evidence>
<evidence type="ECO:0007829" key="14">
    <source>
        <dbReference type="PDB" id="6LCR"/>
    </source>
</evidence>
<keyword id="KW-0002">3D-structure</keyword>
<keyword id="KW-1003">Cell membrane</keyword>
<keyword id="KW-1015">Disulfide bond</keyword>
<keyword id="KW-0325">Glycoprotein</keyword>
<keyword id="KW-0472">Membrane</keyword>
<keyword id="KW-1185">Reference proteome</keyword>
<keyword id="KW-0812">Transmembrane</keyword>
<keyword id="KW-1133">Transmembrane helix</keyword>
<protein>
    <recommendedName>
        <fullName evidence="8">Phospholipid-transporting ATPase accessory subunit CDC50</fullName>
    </recommendedName>
    <alternativeName>
        <fullName evidence="7">CtCDC50</fullName>
    </alternativeName>
</protein>
<dbReference type="EMBL" id="GL988045">
    <property type="protein sequence ID" value="EGS18631.1"/>
    <property type="molecule type" value="Genomic_DNA"/>
</dbReference>
<dbReference type="RefSeq" id="XP_006695576.1">
    <property type="nucleotide sequence ID" value="XM_006695513.1"/>
</dbReference>
<dbReference type="PDB" id="6LCP">
    <property type="method" value="EM"/>
    <property type="resolution" value="3.48 A"/>
    <property type="chains" value="B=1-407"/>
</dbReference>
<dbReference type="PDB" id="6LCR">
    <property type="method" value="EM"/>
    <property type="resolution" value="3.40 A"/>
    <property type="chains" value="B=1-407"/>
</dbReference>
<dbReference type="PDBsum" id="6LCP"/>
<dbReference type="PDBsum" id="6LCR"/>
<dbReference type="EMDB" id="EMD-0872"/>
<dbReference type="EMDB" id="EMD-0873"/>
<dbReference type="SMR" id="G0SDN0"/>
<dbReference type="STRING" id="759272.G0SDN0"/>
<dbReference type="GeneID" id="18259274"/>
<dbReference type="KEGG" id="cthr:CTHT_0052360"/>
<dbReference type="eggNOG" id="KOG2952">
    <property type="taxonomic scope" value="Eukaryota"/>
</dbReference>
<dbReference type="HOGENOM" id="CLU_025025_0_1_1"/>
<dbReference type="OMA" id="TWNNDQP"/>
<dbReference type="OrthoDB" id="340608at2759"/>
<dbReference type="Proteomes" id="UP000008066">
    <property type="component" value="Unassembled WGS sequence"/>
</dbReference>
<dbReference type="GO" id="GO:0005783">
    <property type="term" value="C:endoplasmic reticulum"/>
    <property type="evidence" value="ECO:0007669"/>
    <property type="project" value="TreeGrafter"/>
</dbReference>
<dbReference type="GO" id="GO:0005794">
    <property type="term" value="C:Golgi apparatus"/>
    <property type="evidence" value="ECO:0007669"/>
    <property type="project" value="TreeGrafter"/>
</dbReference>
<dbReference type="GO" id="GO:0005886">
    <property type="term" value="C:plasma membrane"/>
    <property type="evidence" value="ECO:0007669"/>
    <property type="project" value="UniProtKB-SubCell"/>
</dbReference>
<dbReference type="InterPro" id="IPR005045">
    <property type="entry name" value="CDC50/LEM3_fam"/>
</dbReference>
<dbReference type="PANTHER" id="PTHR10926:SF0">
    <property type="entry name" value="CDC50, ISOFORM A"/>
    <property type="match status" value="1"/>
</dbReference>
<dbReference type="PANTHER" id="PTHR10926">
    <property type="entry name" value="CELL CYCLE CONTROL PROTEIN 50"/>
    <property type="match status" value="1"/>
</dbReference>
<dbReference type="Pfam" id="PF03381">
    <property type="entry name" value="CDC50"/>
    <property type="match status" value="1"/>
</dbReference>
<dbReference type="PIRSF" id="PIRSF015840">
    <property type="entry name" value="DUF284_TM_euk"/>
    <property type="match status" value="1"/>
</dbReference>
<sequence>MAPRRRRGAGQDGSDDGRSDSDAPKNRPPNTAFRQQRMRAWQCVLTPKLIVTVFSILAAIYLGFGAWLTYLAHTVRDLKIDYTDCLTSAPKDDFETIPQNHITAHFSAKDSTFDPYKAQWKTTEREVQVANYTDNRQFCIVRFNIPEDLQPTISFFYYLENFYQNHRRYVNSFNAKQLLGDAVDGKTINDSTCDPITHDPKGTGKIVYPCGLVANSIFNDTFSSPLALAVRNSSDSSRPYNMTTKGIAWPGLKDLYGKTSYSLDQIVPPPNWERRYKYGYQENNPPPDLKTDELFQNWMMLAAAPNFYKLYQKNDTHPMLAGQYEIEIESNFDVTVYKGRKAFVITTLSTMGSRNIWPGIIFLIVGGICLVLDIYFILSFFIWRPRKLGDPSYLSWNQPSAPGGHSS</sequence>
<feature type="chain" id="PRO_0000458216" description="Phospholipid-transporting ATPase accessory subunit CDC50">
    <location>
        <begin position="1"/>
        <end position="407"/>
    </location>
</feature>
<feature type="topological domain" description="Cytoplasmic" evidence="8">
    <location>
        <begin position="1"/>
        <end position="48"/>
    </location>
</feature>
<feature type="transmembrane region" description="Helical" evidence="3">
    <location>
        <begin position="49"/>
        <end position="69"/>
    </location>
</feature>
<feature type="topological domain" description="Extracellular" evidence="8">
    <location>
        <begin position="70"/>
        <end position="359"/>
    </location>
</feature>
<feature type="transmembrane region" description="Helical" evidence="3">
    <location>
        <begin position="360"/>
        <end position="380"/>
    </location>
</feature>
<feature type="topological domain" description="Cytoplasmic" evidence="8">
    <location>
        <begin position="381"/>
        <end position="407"/>
    </location>
</feature>
<feature type="region of interest" description="Disordered" evidence="5">
    <location>
        <begin position="1"/>
        <end position="33"/>
    </location>
</feature>
<feature type="compositionally biased region" description="Basic and acidic residues" evidence="5">
    <location>
        <begin position="15"/>
        <end position="25"/>
    </location>
</feature>
<feature type="glycosylation site" description="N-linked (GlcNAc...) asparagine" evidence="4">
    <location>
        <position position="131"/>
    </location>
</feature>
<feature type="glycosylation site" description="N-linked (GlcNAc...) asparagine" evidence="4">
    <location>
        <position position="189"/>
    </location>
</feature>
<feature type="glycosylation site" description="N-linked (GlcNAc...) asparagine" evidence="4">
    <location>
        <position position="219"/>
    </location>
</feature>
<feature type="glycosylation site" description="N-linked (GlcNAc...) asparagine" evidence="4">
    <location>
        <position position="232"/>
    </location>
</feature>
<feature type="glycosylation site" description="N-linked (GlcNAc...) asparagine" evidence="4">
    <location>
        <position position="241"/>
    </location>
</feature>
<feature type="glycosylation site" description="N-linked (GlcNAc...) asparagine" evidence="4">
    <location>
        <position position="314"/>
    </location>
</feature>
<feature type="disulfide bond" evidence="11">
    <location>
        <begin position="85"/>
        <end position="139"/>
    </location>
</feature>
<feature type="disulfide bond" evidence="1">
    <location>
        <begin position="193"/>
        <end position="210"/>
    </location>
</feature>
<feature type="turn" evidence="14">
    <location>
        <begin position="32"/>
        <end position="36"/>
    </location>
</feature>
<feature type="strand" evidence="14">
    <location>
        <begin position="40"/>
        <end position="42"/>
    </location>
</feature>
<feature type="turn" evidence="14">
    <location>
        <begin position="47"/>
        <end position="49"/>
    </location>
</feature>
<feature type="helix" evidence="14">
    <location>
        <begin position="51"/>
        <end position="54"/>
    </location>
</feature>
<feature type="helix" evidence="14">
    <location>
        <begin position="57"/>
        <end position="74"/>
    </location>
</feature>
<feature type="strand" evidence="14">
    <location>
        <begin position="77"/>
        <end position="81"/>
    </location>
</feature>
<feature type="helix" evidence="14">
    <location>
        <begin position="85"/>
        <end position="88"/>
    </location>
</feature>
<feature type="strand" evidence="14">
    <location>
        <begin position="91"/>
        <end position="93"/>
    </location>
</feature>
<feature type="turn" evidence="14">
    <location>
        <begin position="99"/>
        <end position="101"/>
    </location>
</feature>
<feature type="strand" evidence="14">
    <location>
        <begin position="103"/>
        <end position="105"/>
    </location>
</feature>
<feature type="strand" evidence="13">
    <location>
        <begin position="110"/>
        <end position="113"/>
    </location>
</feature>
<feature type="strand" evidence="14">
    <location>
        <begin position="119"/>
        <end position="126"/>
    </location>
</feature>
<feature type="strand" evidence="14">
    <location>
        <begin position="129"/>
        <end position="132"/>
    </location>
</feature>
<feature type="strand" evidence="14">
    <location>
        <begin position="135"/>
        <end position="145"/>
    </location>
</feature>
<feature type="strand" evidence="14">
    <location>
        <begin position="153"/>
        <end position="160"/>
    </location>
</feature>
<feature type="helix" evidence="14">
    <location>
        <begin position="167"/>
        <end position="170"/>
    </location>
</feature>
<feature type="helix" evidence="14">
    <location>
        <begin position="175"/>
        <end position="178"/>
    </location>
</feature>
<feature type="helix" evidence="14">
    <location>
        <begin position="186"/>
        <end position="189"/>
    </location>
</feature>
<feature type="strand" evidence="13">
    <location>
        <begin position="190"/>
        <end position="192"/>
    </location>
</feature>
<feature type="strand" evidence="14">
    <location>
        <begin position="195"/>
        <end position="198"/>
    </location>
</feature>
<feature type="strand" evidence="14">
    <location>
        <begin position="200"/>
        <end position="203"/>
    </location>
</feature>
<feature type="turn" evidence="14">
    <location>
        <begin position="213"/>
        <end position="216"/>
    </location>
</feature>
<feature type="strand" evidence="13">
    <location>
        <begin position="221"/>
        <end position="223"/>
    </location>
</feature>
<feature type="strand" evidence="14">
    <location>
        <begin position="231"/>
        <end position="234"/>
    </location>
</feature>
<feature type="helix" evidence="14">
    <location>
        <begin position="252"/>
        <end position="254"/>
    </location>
</feature>
<feature type="strand" evidence="14">
    <location>
        <begin position="263"/>
        <end position="265"/>
    </location>
</feature>
<feature type="helix" evidence="14">
    <location>
        <begin position="270"/>
        <end position="272"/>
    </location>
</feature>
<feature type="turn" evidence="14">
    <location>
        <begin position="273"/>
        <end position="275"/>
    </location>
</feature>
<feature type="strand" evidence="14">
    <location>
        <begin position="282"/>
        <end position="284"/>
    </location>
</feature>
<feature type="turn" evidence="14">
    <location>
        <begin position="289"/>
        <end position="291"/>
    </location>
</feature>
<feature type="turn" evidence="14">
    <location>
        <begin position="293"/>
        <end position="298"/>
    </location>
</feature>
<feature type="strand" evidence="14">
    <location>
        <begin position="303"/>
        <end position="314"/>
    </location>
</feature>
<feature type="strand" evidence="14">
    <location>
        <begin position="321"/>
        <end position="329"/>
    </location>
</feature>
<feature type="helix" evidence="14">
    <location>
        <begin position="335"/>
        <end position="337"/>
    </location>
</feature>
<feature type="strand" evidence="14">
    <location>
        <begin position="340"/>
        <end position="347"/>
    </location>
</feature>
<feature type="helix" evidence="14">
    <location>
        <begin position="357"/>
        <end position="382"/>
    </location>
</feature>
<feature type="strand" evidence="14">
    <location>
        <begin position="393"/>
        <end position="396"/>
    </location>
</feature>
<gene>
    <name evidence="7" type="primary">CDC50</name>
    <name evidence="9" type="ORF">CTHT_0052360</name>
</gene>
<organism evidence="10">
    <name type="scientific">Chaetomium thermophilum (strain DSM 1495 / CBS 144.50 / IMI 039719)</name>
    <name type="common">Thermochaetoides thermophila</name>
    <dbReference type="NCBI Taxonomy" id="759272"/>
    <lineage>
        <taxon>Eukaryota</taxon>
        <taxon>Fungi</taxon>
        <taxon>Dikarya</taxon>
        <taxon>Ascomycota</taxon>
        <taxon>Pezizomycotina</taxon>
        <taxon>Sordariomycetes</taxon>
        <taxon>Sordariomycetidae</taxon>
        <taxon>Sordariales</taxon>
        <taxon>Chaetomiaceae</taxon>
        <taxon>Thermochaetoides</taxon>
    </lineage>
</organism>
<accession>G0SDN0</accession>